<sequence>MIPLLFILFYFANGIEWHKFETSEEIISTYLLDDVLYTGVNGAVYTFSNNKLNKTGLTNNNYITTSIKVEDADKDTLVCGTNNGNPKCWKIDGSDDPKHRGRGYAPYQNSKVTIISYNECVLSDINISKEGIKRWRRFDGPCGYDLYTADNVIPKDGLRGAFVDKDGTYDKVYILFTDTIGSKRIVKIPYIAQMCLNDEGGPSSLSSHRWSTFLKVELECDIDGRSYRQIIHSRTIKTDNDTILYVFFDSPYSKSALCTYSMNTIKQSFSTSKLEGYTKQLPSPAPGICLPAGKVVSHTTFEVIEKYNVLDDIIKPLSNQPIFEGPSGVKWFDIKEKENEHREYRIYFIKENSIYSFDTKSKQTRSSQVDARLFSVMVTSKPLFIADIGIGVGMPQMKKILKM</sequence>
<feature type="signal peptide" evidence="2">
    <location>
        <begin position="1"/>
        <end position="14"/>
    </location>
</feature>
<feature type="chain" id="PRO_0000099327" description="Semaphorin-like protein A39">
    <location>
        <begin position="15"/>
        <end position="403"/>
    </location>
</feature>
<feature type="domain" description="Sema" evidence="3">
    <location>
        <begin position="15"/>
        <end position="403"/>
    </location>
</feature>
<feature type="strand" evidence="6">
    <location>
        <begin position="16"/>
        <end position="19"/>
    </location>
</feature>
<feature type="strand" evidence="6">
    <location>
        <begin position="28"/>
        <end position="32"/>
    </location>
</feature>
<feature type="strand" evidence="6">
    <location>
        <begin position="35"/>
        <end position="39"/>
    </location>
</feature>
<feature type="strand" evidence="6">
    <location>
        <begin position="41"/>
        <end position="48"/>
    </location>
</feature>
<feature type="strand" evidence="6">
    <location>
        <begin position="51"/>
        <end position="56"/>
    </location>
</feature>
<feature type="strand" evidence="6">
    <location>
        <begin position="62"/>
        <end position="68"/>
    </location>
</feature>
<feature type="strand" evidence="6">
    <location>
        <begin position="76"/>
        <end position="80"/>
    </location>
</feature>
<feature type="helix" evidence="6">
    <location>
        <begin position="82"/>
        <end position="84"/>
    </location>
</feature>
<feature type="strand" evidence="6">
    <location>
        <begin position="87"/>
        <end position="90"/>
    </location>
</feature>
<feature type="strand" evidence="6">
    <location>
        <begin position="107"/>
        <end position="109"/>
    </location>
</feature>
<feature type="strand" evidence="6">
    <location>
        <begin position="114"/>
        <end position="117"/>
    </location>
</feature>
<feature type="strand" evidence="6">
    <location>
        <begin position="120"/>
        <end position="123"/>
    </location>
</feature>
<feature type="strand" evidence="6">
    <location>
        <begin position="159"/>
        <end position="166"/>
    </location>
</feature>
<feature type="strand" evidence="6">
    <location>
        <begin position="169"/>
        <end position="180"/>
    </location>
</feature>
<feature type="strand" evidence="6">
    <location>
        <begin position="182"/>
        <end position="184"/>
    </location>
</feature>
<feature type="strand" evidence="6">
    <location>
        <begin position="186"/>
        <end position="195"/>
    </location>
</feature>
<feature type="helix" evidence="6">
    <location>
        <begin position="204"/>
        <end position="206"/>
    </location>
</feature>
<feature type="strand" evidence="6">
    <location>
        <begin position="214"/>
        <end position="218"/>
    </location>
</feature>
<feature type="strand" evidence="6">
    <location>
        <begin position="229"/>
        <end position="237"/>
    </location>
</feature>
<feature type="strand" evidence="6">
    <location>
        <begin position="242"/>
        <end position="249"/>
    </location>
</feature>
<feature type="strand" evidence="6">
    <location>
        <begin position="251"/>
        <end position="261"/>
    </location>
</feature>
<feature type="helix" evidence="6">
    <location>
        <begin position="262"/>
        <end position="271"/>
    </location>
</feature>
<feature type="helix" evidence="6">
    <location>
        <begin position="298"/>
        <end position="306"/>
    </location>
</feature>
<feature type="strand" evidence="6">
    <location>
        <begin position="309"/>
        <end position="314"/>
    </location>
</feature>
<feature type="helix" evidence="6">
    <location>
        <begin position="317"/>
        <end position="319"/>
    </location>
</feature>
<feature type="strand" evidence="6">
    <location>
        <begin position="322"/>
        <end position="326"/>
    </location>
</feature>
<feature type="strand" evidence="6">
    <location>
        <begin position="331"/>
        <end position="336"/>
    </location>
</feature>
<feature type="strand" evidence="6">
    <location>
        <begin position="338"/>
        <end position="340"/>
    </location>
</feature>
<feature type="strand" evidence="6">
    <location>
        <begin position="344"/>
        <end position="350"/>
    </location>
</feature>
<feature type="strand" evidence="6">
    <location>
        <begin position="353"/>
        <end position="358"/>
    </location>
</feature>
<feature type="turn" evidence="6">
    <location>
        <begin position="359"/>
        <end position="361"/>
    </location>
</feature>
<feature type="strand" evidence="6">
    <location>
        <begin position="364"/>
        <end position="368"/>
    </location>
</feature>
<feature type="strand" evidence="6">
    <location>
        <begin position="373"/>
        <end position="386"/>
    </location>
</feature>
<feature type="strand" evidence="6">
    <location>
        <begin position="389"/>
        <end position="393"/>
    </location>
</feature>
<keyword id="KW-0002">3D-structure</keyword>
<keyword id="KW-1185">Reference proteome</keyword>
<keyword id="KW-0964">Secreted</keyword>
<keyword id="KW-0732">Signal</keyword>
<evidence type="ECO:0000250" key="1"/>
<evidence type="ECO:0000255" key="2"/>
<evidence type="ECO:0000255" key="3">
    <source>
        <dbReference type="PROSITE-ProRule" id="PRU00352"/>
    </source>
</evidence>
<evidence type="ECO:0000269" key="4">
    <source>
    </source>
</evidence>
<evidence type="ECO:0000305" key="5"/>
<evidence type="ECO:0007829" key="6">
    <source>
        <dbReference type="PDB" id="3NVX"/>
    </source>
</evidence>
<accession>P21062</accession>
<protein>
    <recommendedName>
        <fullName>Semaphorin-like protein A39</fullName>
    </recommendedName>
</protein>
<organismHost>
    <name type="scientific">Homo sapiens</name>
    <name type="common">Human</name>
    <dbReference type="NCBI Taxonomy" id="9606"/>
</organismHost>
<proteinExistence type="evidence at protein level"/>
<comment type="function">
    <text evidence="1">Acts as a semaphorin-like protein and binds to host plexin C1 receptor. May alter the movement of host plexin C1-expressing cells including dendritic cells, monocytes, or granulocytes in the proximity of infected cells. May also regulate host cell cytoskeleton of neighboring cells to improve viral infection (By similarity).</text>
</comment>
<comment type="subunit">
    <text evidence="1">Interacts with host VESPR.</text>
</comment>
<comment type="subcellular location">
    <subcellularLocation>
        <location evidence="4">Secreted</location>
    </subcellularLocation>
</comment>
<comment type="similarity">
    <text evidence="5">Belongs to the semaphorin family.</text>
</comment>
<name>SEMA_VACCC</name>
<reference key="1">
    <citation type="journal article" date="1990" name="Virology">
        <title>The complete DNA sequence of vaccinia virus.</title>
        <authorList>
            <person name="Goebel S.J."/>
            <person name="Johnson G.P."/>
            <person name="Perkus M.E."/>
            <person name="Davis S.W."/>
            <person name="Winslow J.P."/>
            <person name="Paoletti E."/>
        </authorList>
    </citation>
    <scope>NUCLEOTIDE SEQUENCE [LARGE SCALE GENOMIC DNA]</scope>
</reference>
<reference key="2">
    <citation type="journal article" date="1990" name="Virology">
        <title>Appendix to 'The complete DNA sequence of vaccinia virus'.</title>
        <authorList>
            <person name="Goebel S.J."/>
            <person name="Johnson G.P."/>
            <person name="Perkus M.E."/>
            <person name="Davis S.W."/>
            <person name="Winslow J.P."/>
            <person name="Paoletti E."/>
        </authorList>
    </citation>
    <scope>NUCLEOTIDE SEQUENCE [LARGE SCALE GENOMIC DNA]</scope>
</reference>
<reference key="3">
    <citation type="journal article" date="2001" name="J. Gen. Virol.">
        <title>Vaccinia virus semaphorin A39R is a 50-55 kDa secreted glycoprotein that affects the outcome of infection in a murine intradermal model.</title>
        <authorList>
            <person name="Gardner J.D."/>
            <person name="Tscharke D.C."/>
            <person name="Reading P.C."/>
            <person name="Smith G.L."/>
        </authorList>
    </citation>
    <scope>SUBCELLULAR LOCATION</scope>
</reference>
<reference key="4">
    <citation type="journal article" date="2010" name="Cell">
        <title>Structural basis of semaphorin-plexin recognition and viral mimicry from Sema7A and A39R complexes with PlexinC1.</title>
        <authorList>
            <person name="Liu H."/>
            <person name="Juo Z.S."/>
            <person name="Shim A.H."/>
            <person name="Focia P.J."/>
            <person name="Chen X."/>
            <person name="Garcia K.C."/>
            <person name="He X."/>
        </authorList>
    </citation>
    <scope>X-RAY CRYSTALLOGRAPHY (2.0 ANGSTROMS) OF 15-396</scope>
</reference>
<organism>
    <name type="scientific">Vaccinia virus (strain Copenhagen)</name>
    <name type="common">VACV</name>
    <dbReference type="NCBI Taxonomy" id="10249"/>
    <lineage>
        <taxon>Viruses</taxon>
        <taxon>Varidnaviria</taxon>
        <taxon>Bamfordvirae</taxon>
        <taxon>Nucleocytoviricota</taxon>
        <taxon>Pokkesviricetes</taxon>
        <taxon>Chitovirales</taxon>
        <taxon>Poxviridae</taxon>
        <taxon>Chordopoxvirinae</taxon>
        <taxon>Orthopoxvirus</taxon>
        <taxon>Vaccinia virus</taxon>
    </lineage>
</organism>
<dbReference type="EMBL" id="M35027">
    <property type="protein sequence ID" value="AAA48169.1"/>
    <property type="molecule type" value="Genomic_DNA"/>
</dbReference>
<dbReference type="PIR" id="E42521">
    <property type="entry name" value="E42521"/>
</dbReference>
<dbReference type="PDB" id="3NVX">
    <property type="method" value="X-ray"/>
    <property type="resolution" value="2.00 A"/>
    <property type="chains" value="A/B=15-396"/>
</dbReference>
<dbReference type="PDBsum" id="3NVX"/>
<dbReference type="SMR" id="P21062"/>
<dbReference type="EvolutionaryTrace" id="P21062"/>
<dbReference type="Proteomes" id="UP000008269">
    <property type="component" value="Segment"/>
</dbReference>
<dbReference type="GO" id="GO:0005576">
    <property type="term" value="C:extracellular region"/>
    <property type="evidence" value="ECO:0007669"/>
    <property type="project" value="UniProtKB-SubCell"/>
</dbReference>
<dbReference type="GO" id="GO:0005886">
    <property type="term" value="C:plasma membrane"/>
    <property type="evidence" value="ECO:0007669"/>
    <property type="project" value="TreeGrafter"/>
</dbReference>
<dbReference type="GO" id="GO:0045499">
    <property type="term" value="F:chemorepellent activity"/>
    <property type="evidence" value="ECO:0007669"/>
    <property type="project" value="TreeGrafter"/>
</dbReference>
<dbReference type="GO" id="GO:0005178">
    <property type="term" value="F:integrin binding"/>
    <property type="evidence" value="ECO:0007669"/>
    <property type="project" value="TreeGrafter"/>
</dbReference>
<dbReference type="GO" id="GO:0030215">
    <property type="term" value="F:semaphorin receptor binding"/>
    <property type="evidence" value="ECO:0007669"/>
    <property type="project" value="InterPro"/>
</dbReference>
<dbReference type="GO" id="GO:0007229">
    <property type="term" value="P:integrin-mediated signaling pathway"/>
    <property type="evidence" value="ECO:0007669"/>
    <property type="project" value="TreeGrafter"/>
</dbReference>
<dbReference type="GO" id="GO:0030335">
    <property type="term" value="P:positive regulation of cell migration"/>
    <property type="evidence" value="ECO:0007669"/>
    <property type="project" value="TreeGrafter"/>
</dbReference>
<dbReference type="GO" id="GO:0050727">
    <property type="term" value="P:regulation of inflammatory response"/>
    <property type="evidence" value="ECO:0007669"/>
    <property type="project" value="TreeGrafter"/>
</dbReference>
<dbReference type="GO" id="GO:0071526">
    <property type="term" value="P:semaphorin-plexin signaling pathway"/>
    <property type="evidence" value="ECO:0007669"/>
    <property type="project" value="TreeGrafter"/>
</dbReference>
<dbReference type="Gene3D" id="2.130.10.10">
    <property type="entry name" value="YVTN repeat-like/Quinoprotein amine dehydrogenase"/>
    <property type="match status" value="1"/>
</dbReference>
<dbReference type="InterPro" id="IPR001627">
    <property type="entry name" value="Semap_dom"/>
</dbReference>
<dbReference type="InterPro" id="IPR036352">
    <property type="entry name" value="Semap_dom_sf"/>
</dbReference>
<dbReference type="InterPro" id="IPR027231">
    <property type="entry name" value="Semaphorin"/>
</dbReference>
<dbReference type="InterPro" id="IPR015943">
    <property type="entry name" value="WD40/YVTN_repeat-like_dom_sf"/>
</dbReference>
<dbReference type="PANTHER" id="PTHR11036">
    <property type="entry name" value="SEMAPHORIN"/>
    <property type="match status" value="1"/>
</dbReference>
<dbReference type="PANTHER" id="PTHR11036:SF80">
    <property type="entry name" value="SEMAPHORIN-7A"/>
    <property type="match status" value="1"/>
</dbReference>
<dbReference type="Pfam" id="PF01403">
    <property type="entry name" value="Sema"/>
    <property type="match status" value="1"/>
</dbReference>
<dbReference type="SMART" id="SM00630">
    <property type="entry name" value="Sema"/>
    <property type="match status" value="1"/>
</dbReference>
<dbReference type="SUPFAM" id="SSF101912">
    <property type="entry name" value="Sema domain"/>
    <property type="match status" value="1"/>
</dbReference>
<dbReference type="PROSITE" id="PS51004">
    <property type="entry name" value="SEMA"/>
    <property type="match status" value="1"/>
</dbReference>
<gene>
    <name type="ORF">A39R</name>
</gene>